<keyword id="KW-0002">3D-structure</keyword>
<keyword id="KW-0238">DNA-binding</keyword>
<keyword id="KW-0479">Metal-binding</keyword>
<keyword id="KW-0539">Nucleus</keyword>
<keyword id="KW-0804">Transcription</keyword>
<keyword id="KW-0805">Transcription regulation</keyword>
<keyword id="KW-0862">Zinc</keyword>
<keyword id="KW-0863">Zinc-finger</keyword>
<organism evidence="9">
    <name type="scientific">Trypanosoma brucei brucei</name>
    <dbReference type="NCBI Taxonomy" id="5702"/>
    <lineage>
        <taxon>Eukaryota</taxon>
        <taxon>Discoba</taxon>
        <taxon>Euglenozoa</taxon>
        <taxon>Kinetoplastea</taxon>
        <taxon>Metakinetoplastina</taxon>
        <taxon>Trypanosomatida</taxon>
        <taxon>Trypanosomatidae</taxon>
        <taxon>Trypanosoma</taxon>
    </lineage>
</organism>
<dbReference type="EMBL" id="AM235385">
    <property type="protein sequence ID" value="CAJ84438.1"/>
    <property type="molecule type" value="mRNA"/>
</dbReference>
<dbReference type="PDB" id="3H4C">
    <property type="method" value="X-ray"/>
    <property type="resolution" value="2.30 A"/>
    <property type="chains" value="A=87-345"/>
</dbReference>
<dbReference type="PDBsum" id="3H4C"/>
<dbReference type="SMR" id="Q257B3"/>
<dbReference type="EvolutionaryTrace" id="Q257B3"/>
<dbReference type="GO" id="GO:0005634">
    <property type="term" value="C:nucleus"/>
    <property type="evidence" value="ECO:0000314"/>
    <property type="project" value="UniProtKB"/>
</dbReference>
<dbReference type="GO" id="GO:0000126">
    <property type="term" value="C:transcription factor TFIIIB complex"/>
    <property type="evidence" value="ECO:0007669"/>
    <property type="project" value="TreeGrafter"/>
</dbReference>
<dbReference type="GO" id="GO:0097550">
    <property type="term" value="C:transcription preinitiation complex"/>
    <property type="evidence" value="ECO:0007669"/>
    <property type="project" value="TreeGrafter"/>
</dbReference>
<dbReference type="GO" id="GO:0000993">
    <property type="term" value="F:RNA polymerase II complex binding"/>
    <property type="evidence" value="ECO:0000314"/>
    <property type="project" value="UniProtKB"/>
</dbReference>
<dbReference type="GO" id="GO:0016251">
    <property type="term" value="F:RNA polymerase II general transcription initiation factor activity"/>
    <property type="evidence" value="ECO:0000314"/>
    <property type="project" value="UniProtKB"/>
</dbReference>
<dbReference type="GO" id="GO:0000995">
    <property type="term" value="F:RNA polymerase III general transcription initiation factor activity"/>
    <property type="evidence" value="ECO:0007669"/>
    <property type="project" value="TreeGrafter"/>
</dbReference>
<dbReference type="GO" id="GO:0001006">
    <property type="term" value="F:RNA polymerase III type 3 promoter sequence-specific DNA binding"/>
    <property type="evidence" value="ECO:0007669"/>
    <property type="project" value="TreeGrafter"/>
</dbReference>
<dbReference type="GO" id="GO:0008270">
    <property type="term" value="F:zinc ion binding"/>
    <property type="evidence" value="ECO:0007669"/>
    <property type="project" value="UniProtKB-KW"/>
</dbReference>
<dbReference type="GO" id="GO:0006367">
    <property type="term" value="P:transcription initiation at RNA polymerase II promoter"/>
    <property type="evidence" value="ECO:0000314"/>
    <property type="project" value="UniProtKB"/>
</dbReference>
<dbReference type="GO" id="GO:0070897">
    <property type="term" value="P:transcription preinitiation complex assembly"/>
    <property type="evidence" value="ECO:0007669"/>
    <property type="project" value="InterPro"/>
</dbReference>
<dbReference type="CDD" id="cd00043">
    <property type="entry name" value="CYCLIN_SF"/>
    <property type="match status" value="1"/>
</dbReference>
<dbReference type="Gene3D" id="1.10.472.110">
    <property type="match status" value="1"/>
</dbReference>
<dbReference type="Gene3D" id="1.10.472.10">
    <property type="entry name" value="Cyclin-like"/>
    <property type="match status" value="1"/>
</dbReference>
<dbReference type="InterPro" id="IPR000812">
    <property type="entry name" value="TFIIB"/>
</dbReference>
<dbReference type="InterPro" id="IPR041189">
    <property type="entry name" value="TFIIB_C_1"/>
</dbReference>
<dbReference type="InterPro" id="IPR054332">
    <property type="entry name" value="TFIIB_C_2"/>
</dbReference>
<dbReference type="PANTHER" id="PTHR11618:SF4">
    <property type="entry name" value="TRANSCRIPTION FACTOR IIIB 90 KDA SUBUNIT"/>
    <property type="match status" value="1"/>
</dbReference>
<dbReference type="PANTHER" id="PTHR11618">
    <property type="entry name" value="TRANSCRIPTION INITIATION FACTOR IIB-RELATED"/>
    <property type="match status" value="1"/>
</dbReference>
<dbReference type="Pfam" id="PF18542">
    <property type="entry name" value="TFIIB_C_1"/>
    <property type="match status" value="1"/>
</dbReference>
<dbReference type="Pfam" id="PF22108">
    <property type="entry name" value="TFIIB_C_2"/>
    <property type="match status" value="1"/>
</dbReference>
<dbReference type="Pfam" id="PF22109">
    <property type="entry name" value="Zn_ribbon_tTFIIB"/>
    <property type="match status" value="1"/>
</dbReference>
<comment type="function">
    <text evidence="3 4 5">Specifically binds to the promoter of the spliced leader (SL) RNA gene and thus is essential for SLRNA transcription.</text>
</comment>
<comment type="subunit">
    <text evidence="3 4 5">Monomer (PubMed:19666603). Interacts with RNA polymerase II subunits RPB1 and RPB2 (PubMed:16467470, PubMed:16554554). Interacts with TBP; the interaction is direct (PubMed:16467470).</text>
</comment>
<comment type="subcellular location">
    <subcellularLocation>
        <location evidence="3 4">Nucleus</location>
    </subcellularLocation>
</comment>
<comment type="developmental stage">
    <text evidence="3 4">Expressed in the procyclic form (at protein level).</text>
</comment>
<comment type="disruption phenotype">
    <text evidence="3 4">RNAi-mediated knockdown in the procyclic form is lethal (PubMed:16467470, PubMed:16554554). Reduces SLRNA gene transcription (PubMed:16467470, PubMed:16554554). Reduces, to a lesser extent, RNA polymerase II-mediated synthesis of alpha-tubulin and HSP70 mRNAs (PubMed:16554554).</text>
</comment>
<comment type="similarity">
    <text evidence="8">Belongs to the TFIIB family.</text>
</comment>
<name>TF2B_TRYBB</name>
<accession>Q257B3</accession>
<proteinExistence type="evidence at protein level"/>
<sequence length="345" mass="37622">MSTTTDFVGRNCPHCSAVDSLQTDDVMGEVACTACALVVAMGLEENVFTRYNENATYEDVDHHRERNANPTAATSAAGSLSAADPHMSSTSSKVVLHPTMLNCMRGLHKKAVLPEPVLDRGIELARAFVGGRRARGQRVERQPDVAAACLMIAAEEAQQPLPLAEVRCLDSSLGDVELRRADIVRELHLEDSERRLRDTFADNLLVKYILKLGLQVSLYLPHCKRLLTALGRVEALAGLTVADRVTTALLLARTAQTLSWEQGTHISKGKECDLGMEAIYANFSSKAHLEVTKVNKIMHLAVDVLPLIQAAFQDCGEPTAGKRKVDKNSEPEASGGTKRVKREET</sequence>
<gene>
    <name evidence="8" type="primary">tf2b</name>
</gene>
<reference evidence="9" key="1">
    <citation type="journal article" date="2006" name="Nucleic Acids Res.">
        <title>A TFIIB-like protein is indispensable for spliced leader RNA gene transcription in Trypanosoma brucei.</title>
        <authorList>
            <person name="Schimanski B."/>
            <person name="Brandenburg J."/>
            <person name="Nguyen T.N."/>
            <person name="Caimano M.J."/>
            <person name="Guenzl A."/>
        </authorList>
    </citation>
    <scope>NUCLEOTIDE SEQUENCE [MRNA]</scope>
    <scope>FUNCTION</scope>
    <scope>INTERACTION WITH RPB1 AND RPB2</scope>
    <scope>SUBCELLULAR LOCATION</scope>
    <scope>DEVELOPMENTAL STAGE</scope>
    <scope>DISRUPTION PHENOTYPE</scope>
</reference>
<reference evidence="8" key="2">
    <citation type="journal article" date="2006" name="Eukaryot. Cell">
        <title>A divergent transcription factor TFIIB in trypanosomes is required for RNA polymerase II-dependent spliced leader RNA transcription and cell viability.</title>
        <authorList>
            <person name="Palenchar J.B."/>
            <person name="Liu W."/>
            <person name="Palenchar P.M."/>
            <person name="Bellofatto V."/>
        </authorList>
    </citation>
    <scope>FUNCTION</scope>
    <scope>INTERACTION WITH RPB1 AND TBP</scope>
    <scope>SUBCELLULAR LOCATION</scope>
    <scope>DEVELOPMENTAL STAGE</scope>
    <scope>DISRUPTION PHENOTYPE</scope>
</reference>
<reference evidence="10" key="3">
    <citation type="journal article" date="2009" name="Proc. Natl. Acad. Sci. U.S.A.">
        <title>Structure of the C-terminal domain of transcription factor IIB from Trypanosoma brucei.</title>
        <authorList>
            <person name="Ibrahim B.S."/>
            <person name="Kanneganti N."/>
            <person name="Rieckhof G.E."/>
            <person name="Das A."/>
            <person name="Laurents D.V."/>
            <person name="Palenchar J.B."/>
            <person name="Bellofatto V."/>
            <person name="Wah D.A."/>
        </authorList>
    </citation>
    <scope>X-RAY CRYSTALLOGRAPHY (2.30 ANGSTROMS) OF 87-345</scope>
    <scope>FUNCTION</scope>
    <scope>SUBUNIT</scope>
    <scope>MUTAGENESIS OF ARG-135; ARG-138; ARG-179; ARG-194; ARG-195; LYS-268; LYS-270; THR-292; LYS-293; ASN-295 AND LYS-296</scope>
</reference>
<evidence type="ECO:0000255" key="1">
    <source>
        <dbReference type="PROSITE-ProRule" id="PRU00469"/>
    </source>
</evidence>
<evidence type="ECO:0000256" key="2">
    <source>
        <dbReference type="SAM" id="MobiDB-lite"/>
    </source>
</evidence>
<evidence type="ECO:0000269" key="3">
    <source>
    </source>
</evidence>
<evidence type="ECO:0000269" key="4">
    <source>
    </source>
</evidence>
<evidence type="ECO:0000269" key="5">
    <source>
    </source>
</evidence>
<evidence type="ECO:0000303" key="6">
    <source>
    </source>
</evidence>
<evidence type="ECO:0000303" key="7">
    <source>
    </source>
</evidence>
<evidence type="ECO:0000305" key="8"/>
<evidence type="ECO:0000312" key="9">
    <source>
        <dbReference type="EMBL" id="CAJ84438.1"/>
    </source>
</evidence>
<evidence type="ECO:0007744" key="10">
    <source>
        <dbReference type="PDB" id="3H4C"/>
    </source>
</evidence>
<evidence type="ECO:0007829" key="11">
    <source>
        <dbReference type="PDB" id="3H4C"/>
    </source>
</evidence>
<protein>
    <recommendedName>
        <fullName evidence="8">Transcription initiation factor IIB</fullName>
    </recommendedName>
    <alternativeName>
        <fullName evidence="7">Transcription factor TFIIB-like</fullName>
        <shortName evidence="7">TFIIB-like</shortName>
        <shortName evidence="6">TbTFIIB</shortName>
    </alternativeName>
</protein>
<feature type="chain" id="PRO_0000458863" description="Transcription initiation factor IIB">
    <location>
        <begin position="1"/>
        <end position="345"/>
    </location>
</feature>
<feature type="zinc finger region" description="TFIIB-type" evidence="1">
    <location>
        <begin position="8"/>
        <end position="40"/>
    </location>
</feature>
<feature type="region of interest" description="Disordered" evidence="2">
    <location>
        <begin position="59"/>
        <end position="89"/>
    </location>
</feature>
<feature type="region of interest" description="Disordered" evidence="2">
    <location>
        <begin position="318"/>
        <end position="345"/>
    </location>
</feature>
<feature type="compositionally biased region" description="Low complexity" evidence="2">
    <location>
        <begin position="71"/>
        <end position="83"/>
    </location>
</feature>
<feature type="binding site" evidence="1">
    <location>
        <position position="12"/>
    </location>
    <ligand>
        <name>Zn(2+)</name>
        <dbReference type="ChEBI" id="CHEBI:29105"/>
    </ligand>
</feature>
<feature type="binding site" evidence="1">
    <location>
        <position position="15"/>
    </location>
    <ligand>
        <name>Zn(2+)</name>
        <dbReference type="ChEBI" id="CHEBI:29105"/>
    </ligand>
</feature>
<feature type="binding site" evidence="1">
    <location>
        <position position="32"/>
    </location>
    <ligand>
        <name>Zn(2+)</name>
        <dbReference type="ChEBI" id="CHEBI:29105"/>
    </ligand>
</feature>
<feature type="binding site" evidence="1">
    <location>
        <position position="35"/>
    </location>
    <ligand>
        <name>Zn(2+)</name>
        <dbReference type="ChEBI" id="CHEBI:29105"/>
    </ligand>
</feature>
<feature type="mutagenesis site" description="Severe loss of SLRNA gene transcription." evidence="5">
    <original>R</original>
    <variation>A</variation>
    <location>
        <position position="135"/>
    </location>
</feature>
<feature type="mutagenesis site" description="No effect on SLRNA gene transcription." evidence="5">
    <original>R</original>
    <variation>A</variation>
    <location>
        <position position="138"/>
    </location>
</feature>
<feature type="mutagenesis site" description="Moderate loss of SLRNA gene transcription." evidence="5">
    <original>R</original>
    <variation>A</variation>
    <location>
        <position position="179"/>
    </location>
</feature>
<feature type="mutagenesis site" description="Moderate loss of SLRNA gene transcription." evidence="5">
    <original>R</original>
    <variation>A</variation>
    <location>
        <position position="194"/>
    </location>
</feature>
<feature type="mutagenesis site" description="Moderate loss of SLRNA gene transcription." evidence="5">
    <original>R</original>
    <variation>A</variation>
    <location>
        <position position="195"/>
    </location>
</feature>
<feature type="mutagenesis site" description="Moderate loss of SLRNA gene transcription." evidence="5">
    <original>K</original>
    <variation>A</variation>
    <location>
        <position position="268"/>
    </location>
</feature>
<feature type="mutagenesis site" description="Moderate loss of SLRNA gene transcription." evidence="5">
    <original>K</original>
    <variation>A</variation>
    <location>
        <position position="270"/>
    </location>
</feature>
<feature type="mutagenesis site" description="No effect on SLRNA gene transcription." evidence="5">
    <original>T</original>
    <variation>A</variation>
    <location>
        <position position="292"/>
    </location>
</feature>
<feature type="mutagenesis site" description="Moderate loss of SLRNA gene transcription." evidence="5">
    <original>K</original>
    <variation>A</variation>
    <location>
        <position position="293"/>
    </location>
</feature>
<feature type="mutagenesis site" description="Moderate loss of SLRNA gene transcription." evidence="5">
    <original>N</original>
    <variation>A</variation>
    <location>
        <position position="295"/>
    </location>
</feature>
<feature type="mutagenesis site" description="Moderate loss of SLRNA gene transcription." evidence="5">
    <original>K</original>
    <variation>A</variation>
    <location>
        <position position="296"/>
    </location>
</feature>
<feature type="helix" evidence="11">
    <location>
        <begin position="98"/>
        <end position="110"/>
    </location>
</feature>
<feature type="helix" evidence="11">
    <location>
        <begin position="115"/>
        <end position="134"/>
    </location>
</feature>
<feature type="helix" evidence="11">
    <location>
        <begin position="142"/>
        <end position="156"/>
    </location>
</feature>
<feature type="helix" evidence="11">
    <location>
        <begin position="163"/>
        <end position="169"/>
    </location>
</feature>
<feature type="helix" evidence="11">
    <location>
        <begin position="176"/>
        <end position="186"/>
    </location>
</feature>
<feature type="helix" evidence="11">
    <location>
        <begin position="190"/>
        <end position="211"/>
    </location>
</feature>
<feature type="helix" evidence="11">
    <location>
        <begin position="216"/>
        <end position="231"/>
    </location>
</feature>
<feature type="helix" evidence="11">
    <location>
        <begin position="234"/>
        <end position="236"/>
    </location>
</feature>
<feature type="helix" evidence="11">
    <location>
        <begin position="241"/>
        <end position="254"/>
    </location>
</feature>
<feature type="helix" evidence="11">
    <location>
        <begin position="257"/>
        <end position="260"/>
    </location>
</feature>
<feature type="helix" evidence="11">
    <location>
        <begin position="276"/>
        <end position="287"/>
    </location>
</feature>
<feature type="helix" evidence="11">
    <location>
        <begin position="291"/>
        <end position="303"/>
    </location>
</feature>
<feature type="helix" evidence="11">
    <location>
        <begin position="305"/>
        <end position="312"/>
    </location>
</feature>